<comment type="function">
    <text evidence="1">Provides the (R)-glutamate required for cell wall biosynthesis.</text>
</comment>
<comment type="catalytic activity">
    <reaction evidence="1">
        <text>L-glutamate = D-glutamate</text>
        <dbReference type="Rhea" id="RHEA:12813"/>
        <dbReference type="ChEBI" id="CHEBI:29985"/>
        <dbReference type="ChEBI" id="CHEBI:29986"/>
        <dbReference type="EC" id="5.1.1.3"/>
    </reaction>
</comment>
<comment type="pathway">
    <text evidence="1">Cell wall biogenesis; peptidoglycan biosynthesis.</text>
</comment>
<comment type="similarity">
    <text evidence="1">Belongs to the aspartate/glutamate racemases family.</text>
</comment>
<gene>
    <name evidence="1" type="primary">murI</name>
    <name type="ordered locus">ECDH10B_4156</name>
</gene>
<organism>
    <name type="scientific">Escherichia coli (strain K12 / DH10B)</name>
    <dbReference type="NCBI Taxonomy" id="316385"/>
    <lineage>
        <taxon>Bacteria</taxon>
        <taxon>Pseudomonadati</taxon>
        <taxon>Pseudomonadota</taxon>
        <taxon>Gammaproteobacteria</taxon>
        <taxon>Enterobacterales</taxon>
        <taxon>Enterobacteriaceae</taxon>
        <taxon>Escherichia</taxon>
    </lineage>
</organism>
<proteinExistence type="inferred from homology"/>
<accession>B1XBX8</accession>
<keyword id="KW-0133">Cell shape</keyword>
<keyword id="KW-0961">Cell wall biogenesis/degradation</keyword>
<keyword id="KW-0413">Isomerase</keyword>
<keyword id="KW-0573">Peptidoglycan synthesis</keyword>
<dbReference type="EC" id="5.1.1.3" evidence="1"/>
<dbReference type="EMBL" id="CP000948">
    <property type="protein sequence ID" value="ACB04978.1"/>
    <property type="molecule type" value="Genomic_DNA"/>
</dbReference>
<dbReference type="RefSeq" id="WP_000201820.1">
    <property type="nucleotide sequence ID" value="NC_010473.1"/>
</dbReference>
<dbReference type="SMR" id="B1XBX8"/>
<dbReference type="KEGG" id="ecd:ECDH10B_4156"/>
<dbReference type="HOGENOM" id="CLU_052344_2_0_6"/>
<dbReference type="UniPathway" id="UPA00219"/>
<dbReference type="GO" id="GO:0008881">
    <property type="term" value="F:glutamate racemase activity"/>
    <property type="evidence" value="ECO:0007669"/>
    <property type="project" value="UniProtKB-UniRule"/>
</dbReference>
<dbReference type="GO" id="GO:0071555">
    <property type="term" value="P:cell wall organization"/>
    <property type="evidence" value="ECO:0007669"/>
    <property type="project" value="UniProtKB-KW"/>
</dbReference>
<dbReference type="GO" id="GO:0009252">
    <property type="term" value="P:peptidoglycan biosynthetic process"/>
    <property type="evidence" value="ECO:0007669"/>
    <property type="project" value="UniProtKB-UniRule"/>
</dbReference>
<dbReference type="GO" id="GO:0008360">
    <property type="term" value="P:regulation of cell shape"/>
    <property type="evidence" value="ECO:0007669"/>
    <property type="project" value="UniProtKB-KW"/>
</dbReference>
<dbReference type="FunFam" id="3.40.50.1860:FF:000002">
    <property type="entry name" value="Glutamate racemase"/>
    <property type="match status" value="1"/>
</dbReference>
<dbReference type="Gene3D" id="3.40.50.1860">
    <property type="match status" value="2"/>
</dbReference>
<dbReference type="HAMAP" id="MF_00258">
    <property type="entry name" value="Glu_racemase"/>
    <property type="match status" value="1"/>
</dbReference>
<dbReference type="InterPro" id="IPR015942">
    <property type="entry name" value="Asp/Glu/hydantoin_racemase"/>
</dbReference>
<dbReference type="InterPro" id="IPR001920">
    <property type="entry name" value="Asp/Glu_race"/>
</dbReference>
<dbReference type="InterPro" id="IPR018187">
    <property type="entry name" value="Asp/Glu_racemase_AS_1"/>
</dbReference>
<dbReference type="InterPro" id="IPR033134">
    <property type="entry name" value="Asp/Glu_racemase_AS_2"/>
</dbReference>
<dbReference type="InterPro" id="IPR004391">
    <property type="entry name" value="Glu_race"/>
</dbReference>
<dbReference type="NCBIfam" id="TIGR00067">
    <property type="entry name" value="glut_race"/>
    <property type="match status" value="1"/>
</dbReference>
<dbReference type="NCBIfam" id="NF002034">
    <property type="entry name" value="PRK00865.1-1"/>
    <property type="match status" value="1"/>
</dbReference>
<dbReference type="PANTHER" id="PTHR21198">
    <property type="entry name" value="GLUTAMATE RACEMASE"/>
    <property type="match status" value="1"/>
</dbReference>
<dbReference type="PANTHER" id="PTHR21198:SF2">
    <property type="entry name" value="GLUTAMATE RACEMASE"/>
    <property type="match status" value="1"/>
</dbReference>
<dbReference type="Pfam" id="PF01177">
    <property type="entry name" value="Asp_Glu_race"/>
    <property type="match status" value="1"/>
</dbReference>
<dbReference type="SUPFAM" id="SSF53681">
    <property type="entry name" value="Aspartate/glutamate racemase"/>
    <property type="match status" value="2"/>
</dbReference>
<dbReference type="PROSITE" id="PS00923">
    <property type="entry name" value="ASP_GLU_RACEMASE_1"/>
    <property type="match status" value="1"/>
</dbReference>
<dbReference type="PROSITE" id="PS00924">
    <property type="entry name" value="ASP_GLU_RACEMASE_2"/>
    <property type="match status" value="1"/>
</dbReference>
<sequence>MATKLQDGNTPCLAATPSEPRPTVLVFDSGVGGLSVYDEIRHLLPDLHYIYAFDNVAFPYGEKSEAFIVERVVAIVTAVQERYPLALAVVACNTASTVSLPALREKFDFPVVGVVPAIKPAARLTANGIVGLLATRGTVKRSYTHELIARFANECQIEMLGSAEMVELAEAKLHGEDVSLDALKRILRPWLRMKEPPDTVVLGCTHFPLLQEELLQVLPEGTRLVDSGAAIARRTAWLLEHEAPDAKSADANIAFCMAMTPGAEQLLPVLQRYGFETLEKLAVLG</sequence>
<name>MURI_ECODH</name>
<feature type="chain" id="PRO_1000114041" description="Glutamate racemase">
    <location>
        <begin position="1"/>
        <end position="285"/>
    </location>
</feature>
<feature type="active site" description="Proton donor/acceptor" evidence="1">
    <location>
        <position position="92"/>
    </location>
</feature>
<feature type="active site" description="Proton donor/acceptor" evidence="1">
    <location>
        <position position="204"/>
    </location>
</feature>
<feature type="binding site" evidence="1">
    <location>
        <begin position="28"/>
        <end position="29"/>
    </location>
    <ligand>
        <name>substrate</name>
    </ligand>
</feature>
<feature type="binding site" evidence="1">
    <location>
        <begin position="60"/>
        <end position="61"/>
    </location>
    <ligand>
        <name>substrate</name>
    </ligand>
</feature>
<feature type="binding site" evidence="1">
    <location>
        <begin position="93"/>
        <end position="94"/>
    </location>
    <ligand>
        <name>substrate</name>
    </ligand>
</feature>
<feature type="binding site" evidence="1">
    <location>
        <begin position="205"/>
        <end position="206"/>
    </location>
    <ligand>
        <name>substrate</name>
    </ligand>
</feature>
<reference key="1">
    <citation type="journal article" date="2008" name="J. Bacteriol.">
        <title>The complete genome sequence of Escherichia coli DH10B: insights into the biology of a laboratory workhorse.</title>
        <authorList>
            <person name="Durfee T."/>
            <person name="Nelson R."/>
            <person name="Baldwin S."/>
            <person name="Plunkett G. III"/>
            <person name="Burland V."/>
            <person name="Mau B."/>
            <person name="Petrosino J.F."/>
            <person name="Qin X."/>
            <person name="Muzny D.M."/>
            <person name="Ayele M."/>
            <person name="Gibbs R.A."/>
            <person name="Csorgo B."/>
            <person name="Posfai G."/>
            <person name="Weinstock G.M."/>
            <person name="Blattner F.R."/>
        </authorList>
    </citation>
    <scope>NUCLEOTIDE SEQUENCE [LARGE SCALE GENOMIC DNA]</scope>
    <source>
        <strain>K12 / DH10B</strain>
    </source>
</reference>
<protein>
    <recommendedName>
        <fullName evidence="1">Glutamate racemase</fullName>
        <ecNumber evidence="1">5.1.1.3</ecNumber>
    </recommendedName>
</protein>
<evidence type="ECO:0000255" key="1">
    <source>
        <dbReference type="HAMAP-Rule" id="MF_00258"/>
    </source>
</evidence>